<name>FTSA_STAAR</name>
<keyword id="KW-0002">3D-structure</keyword>
<keyword id="KW-0131">Cell cycle</keyword>
<keyword id="KW-0132">Cell division</keyword>
<keyword id="KW-1003">Cell membrane</keyword>
<keyword id="KW-0472">Membrane</keyword>
<accession>Q6GHQ0</accession>
<protein>
    <recommendedName>
        <fullName evidence="1">Cell division protein FtsA</fullName>
    </recommendedName>
</protein>
<feature type="chain" id="PRO_0000062749" description="Cell division protein FtsA">
    <location>
        <begin position="1"/>
        <end position="468"/>
    </location>
</feature>
<feature type="region of interest" description="Disordered" evidence="2">
    <location>
        <begin position="416"/>
        <end position="468"/>
    </location>
</feature>
<feature type="compositionally biased region" description="Acidic residues" evidence="2">
    <location>
        <begin position="425"/>
        <end position="434"/>
    </location>
</feature>
<feature type="compositionally biased region" description="Basic and acidic residues" evidence="2">
    <location>
        <begin position="436"/>
        <end position="459"/>
    </location>
</feature>
<feature type="strand" evidence="3">
    <location>
        <begin position="6"/>
        <end position="11"/>
    </location>
</feature>
<feature type="strand" evidence="3">
    <location>
        <begin position="13"/>
        <end position="24"/>
    </location>
</feature>
<feature type="strand" evidence="3">
    <location>
        <begin position="27"/>
        <end position="37"/>
    </location>
</feature>
<feature type="strand" evidence="3">
    <location>
        <begin position="39"/>
        <end position="42"/>
    </location>
</feature>
<feature type="strand" evidence="3">
    <location>
        <begin position="45"/>
        <end position="48"/>
    </location>
</feature>
<feature type="helix" evidence="3">
    <location>
        <begin position="49"/>
        <end position="67"/>
    </location>
</feature>
<feature type="strand" evidence="3">
    <location>
        <begin position="73"/>
        <end position="78"/>
    </location>
</feature>
<feature type="strand" evidence="3">
    <location>
        <begin position="80"/>
        <end position="93"/>
    </location>
</feature>
<feature type="helix" evidence="3">
    <location>
        <begin position="102"/>
        <end position="112"/>
    </location>
</feature>
<feature type="strand" evidence="3">
    <location>
        <begin position="121"/>
        <end position="133"/>
    </location>
</feature>
<feature type="turn" evidence="3">
    <location>
        <begin position="134"/>
        <end position="136"/>
    </location>
</feature>
<feature type="strand" evidence="3">
    <location>
        <begin position="137"/>
        <end position="140"/>
    </location>
</feature>
<feature type="strand" evidence="3">
    <location>
        <begin position="146"/>
        <end position="161"/>
    </location>
</feature>
<feature type="helix" evidence="3">
    <location>
        <begin position="162"/>
        <end position="173"/>
    </location>
</feature>
<feature type="turn" evidence="3">
    <location>
        <begin position="174"/>
        <end position="176"/>
    </location>
</feature>
<feature type="strand" evidence="3">
    <location>
        <begin position="178"/>
        <end position="184"/>
    </location>
</feature>
<feature type="helix" evidence="3">
    <location>
        <begin position="185"/>
        <end position="188"/>
    </location>
</feature>
<feature type="helix" evidence="3">
    <location>
        <begin position="189"/>
        <end position="192"/>
    </location>
</feature>
<feature type="helix" evidence="3">
    <location>
        <begin position="195"/>
        <end position="200"/>
    </location>
</feature>
<feature type="strand" evidence="3">
    <location>
        <begin position="202"/>
        <end position="207"/>
    </location>
</feature>
<feature type="strand" evidence="3">
    <location>
        <begin position="212"/>
        <end position="218"/>
    </location>
</feature>
<feature type="strand" evidence="3">
    <location>
        <begin position="221"/>
        <end position="229"/>
    </location>
</feature>
<feature type="helix" evidence="3">
    <location>
        <begin position="232"/>
        <end position="242"/>
    </location>
</feature>
<feature type="helix" evidence="3">
    <location>
        <begin position="247"/>
        <end position="257"/>
    </location>
</feature>
<feature type="helix" evidence="3">
    <location>
        <begin position="262"/>
        <end position="264"/>
    </location>
</feature>
<feature type="strand" evidence="3">
    <location>
        <begin position="270"/>
        <end position="274"/>
    </location>
</feature>
<feature type="strand" evidence="3">
    <location>
        <begin position="276"/>
        <end position="279"/>
    </location>
</feature>
<feature type="strand" evidence="3">
    <location>
        <begin position="281"/>
        <end position="285"/>
    </location>
</feature>
<feature type="helix" evidence="3">
    <location>
        <begin position="286"/>
        <end position="310"/>
    </location>
</feature>
<feature type="strand" evidence="3">
    <location>
        <begin position="319"/>
        <end position="324"/>
    </location>
</feature>
<feature type="helix" evidence="3">
    <location>
        <begin position="325"/>
        <end position="328"/>
    </location>
</feature>
<feature type="helix" evidence="3">
    <location>
        <begin position="332"/>
        <end position="337"/>
    </location>
</feature>
<feature type="strand" evidence="4">
    <location>
        <begin position="340"/>
        <end position="342"/>
    </location>
</feature>
<feature type="strand" evidence="3">
    <location>
        <begin position="344"/>
        <end position="346"/>
    </location>
</feature>
<feature type="strand" evidence="4">
    <location>
        <begin position="350"/>
        <end position="353"/>
    </location>
</feature>
<feature type="helix" evidence="3">
    <location>
        <begin position="357"/>
        <end position="359"/>
    </location>
</feature>
<feature type="helix" evidence="3">
    <location>
        <begin position="360"/>
        <end position="376"/>
    </location>
</feature>
<organism>
    <name type="scientific">Staphylococcus aureus (strain MRSA252)</name>
    <dbReference type="NCBI Taxonomy" id="282458"/>
    <lineage>
        <taxon>Bacteria</taxon>
        <taxon>Bacillati</taxon>
        <taxon>Bacillota</taxon>
        <taxon>Bacilli</taxon>
        <taxon>Bacillales</taxon>
        <taxon>Staphylococcaceae</taxon>
        <taxon>Staphylococcus</taxon>
    </lineage>
</organism>
<dbReference type="EMBL" id="BX571856">
    <property type="protein sequence ID" value="CAG40163.1"/>
    <property type="molecule type" value="Genomic_DNA"/>
</dbReference>
<dbReference type="RefSeq" id="WP_000391030.1">
    <property type="nucleotide sequence ID" value="NC_002952.2"/>
</dbReference>
<dbReference type="PDB" id="3WQT">
    <property type="method" value="X-ray"/>
    <property type="resolution" value="2.20 A"/>
    <property type="chains" value="A/B/C/D=1-468"/>
</dbReference>
<dbReference type="PDB" id="3WQU">
    <property type="method" value="X-ray"/>
    <property type="resolution" value="2.80 A"/>
    <property type="chains" value="A/B/C/D=1-468"/>
</dbReference>
<dbReference type="PDBsum" id="3WQT"/>
<dbReference type="PDBsum" id="3WQU"/>
<dbReference type="SMR" id="Q6GHQ0"/>
<dbReference type="IntAct" id="Q6GHQ0">
    <property type="interactions" value="1"/>
</dbReference>
<dbReference type="MINT" id="Q6GHQ0"/>
<dbReference type="KEGG" id="sar:SAR1161"/>
<dbReference type="HOGENOM" id="CLU_037850_1_0_9"/>
<dbReference type="EvolutionaryTrace" id="Q6GHQ0"/>
<dbReference type="Proteomes" id="UP000000596">
    <property type="component" value="Chromosome"/>
</dbReference>
<dbReference type="GO" id="GO:0032153">
    <property type="term" value="C:cell division site"/>
    <property type="evidence" value="ECO:0007669"/>
    <property type="project" value="UniProtKB-UniRule"/>
</dbReference>
<dbReference type="GO" id="GO:0009898">
    <property type="term" value="C:cytoplasmic side of plasma membrane"/>
    <property type="evidence" value="ECO:0007669"/>
    <property type="project" value="UniProtKB-UniRule"/>
</dbReference>
<dbReference type="GO" id="GO:0043093">
    <property type="term" value="P:FtsZ-dependent cytokinesis"/>
    <property type="evidence" value="ECO:0007669"/>
    <property type="project" value="UniProtKB-UniRule"/>
</dbReference>
<dbReference type="CDD" id="cd24048">
    <property type="entry name" value="ASKHA_NBD_FtsA"/>
    <property type="match status" value="1"/>
</dbReference>
<dbReference type="FunFam" id="3.30.420.40:FF:000196">
    <property type="entry name" value="Cell division protein FtsA"/>
    <property type="match status" value="1"/>
</dbReference>
<dbReference type="Gene3D" id="3.30.1490.110">
    <property type="match status" value="1"/>
</dbReference>
<dbReference type="Gene3D" id="3.30.420.40">
    <property type="match status" value="2"/>
</dbReference>
<dbReference type="HAMAP" id="MF_02033">
    <property type="entry name" value="FtsA"/>
    <property type="match status" value="1"/>
</dbReference>
<dbReference type="InterPro" id="IPR043129">
    <property type="entry name" value="ATPase_NBD"/>
</dbReference>
<dbReference type="InterPro" id="IPR020823">
    <property type="entry name" value="Cell_div_FtsA"/>
</dbReference>
<dbReference type="InterPro" id="IPR050696">
    <property type="entry name" value="FtsA/MreB"/>
</dbReference>
<dbReference type="InterPro" id="IPR003494">
    <property type="entry name" value="SHS2_FtsA"/>
</dbReference>
<dbReference type="NCBIfam" id="TIGR01174">
    <property type="entry name" value="ftsA"/>
    <property type="match status" value="1"/>
</dbReference>
<dbReference type="PANTHER" id="PTHR32432:SF4">
    <property type="entry name" value="CELL DIVISION PROTEIN FTSA"/>
    <property type="match status" value="1"/>
</dbReference>
<dbReference type="PANTHER" id="PTHR32432">
    <property type="entry name" value="CELL DIVISION PROTEIN FTSA-RELATED"/>
    <property type="match status" value="1"/>
</dbReference>
<dbReference type="Pfam" id="PF14450">
    <property type="entry name" value="FtsA"/>
    <property type="match status" value="1"/>
</dbReference>
<dbReference type="Pfam" id="PF02491">
    <property type="entry name" value="SHS2_FTSA"/>
    <property type="match status" value="1"/>
</dbReference>
<dbReference type="PIRSF" id="PIRSF003101">
    <property type="entry name" value="FtsA"/>
    <property type="match status" value="1"/>
</dbReference>
<dbReference type="SMART" id="SM00842">
    <property type="entry name" value="FtsA"/>
    <property type="match status" value="1"/>
</dbReference>
<dbReference type="SUPFAM" id="SSF53067">
    <property type="entry name" value="Actin-like ATPase domain"/>
    <property type="match status" value="2"/>
</dbReference>
<comment type="function">
    <text evidence="1">Cell division protein that is involved in the assembly of the Z ring. May serve as a membrane anchor for the Z ring.</text>
</comment>
<comment type="subunit">
    <text evidence="1">Self-interacts. Interacts with FtsZ.</text>
</comment>
<comment type="interaction">
    <interactant intactId="EBI-9351810">
        <id>Q6GHQ0</id>
    </interactant>
    <interactant intactId="EBI-9351832">
        <id>Q6GHP9</id>
        <label>ftsZ</label>
    </interactant>
    <organismsDiffer>false</organismsDiffer>
    <experiments>2</experiments>
</comment>
<comment type="subcellular location">
    <subcellularLocation>
        <location evidence="1">Cell membrane</location>
        <topology evidence="1">Peripheral membrane protein</topology>
        <orientation evidence="1">Cytoplasmic side</orientation>
    </subcellularLocation>
    <text evidence="1">Localizes to the Z ring in an FtsZ-dependent manner. Targeted to the membrane through a conserved C-terminal amphipathic helix.</text>
</comment>
<comment type="similarity">
    <text evidence="1">Belongs to the FtsA/MreB family.</text>
</comment>
<reference key="1">
    <citation type="journal article" date="2004" name="Proc. Natl. Acad. Sci. U.S.A.">
        <title>Complete genomes of two clinical Staphylococcus aureus strains: evidence for the rapid evolution of virulence and drug resistance.</title>
        <authorList>
            <person name="Holden M.T.G."/>
            <person name="Feil E.J."/>
            <person name="Lindsay J.A."/>
            <person name="Peacock S.J."/>
            <person name="Day N.P.J."/>
            <person name="Enright M.C."/>
            <person name="Foster T.J."/>
            <person name="Moore C.E."/>
            <person name="Hurst L."/>
            <person name="Atkin R."/>
            <person name="Barron A."/>
            <person name="Bason N."/>
            <person name="Bentley S.D."/>
            <person name="Chillingworth C."/>
            <person name="Chillingworth T."/>
            <person name="Churcher C."/>
            <person name="Clark L."/>
            <person name="Corton C."/>
            <person name="Cronin A."/>
            <person name="Doggett J."/>
            <person name="Dowd L."/>
            <person name="Feltwell T."/>
            <person name="Hance Z."/>
            <person name="Harris B."/>
            <person name="Hauser H."/>
            <person name="Holroyd S."/>
            <person name="Jagels K."/>
            <person name="James K.D."/>
            <person name="Lennard N."/>
            <person name="Line A."/>
            <person name="Mayes R."/>
            <person name="Moule S."/>
            <person name="Mungall K."/>
            <person name="Ormond D."/>
            <person name="Quail M.A."/>
            <person name="Rabbinowitsch E."/>
            <person name="Rutherford K.M."/>
            <person name="Sanders M."/>
            <person name="Sharp S."/>
            <person name="Simmonds M."/>
            <person name="Stevens K."/>
            <person name="Whitehead S."/>
            <person name="Barrell B.G."/>
            <person name="Spratt B.G."/>
            <person name="Parkhill J."/>
        </authorList>
    </citation>
    <scope>NUCLEOTIDE SEQUENCE [LARGE SCALE GENOMIC DNA]</scope>
    <source>
        <strain>MRSA252</strain>
    </source>
</reference>
<evidence type="ECO:0000255" key="1">
    <source>
        <dbReference type="HAMAP-Rule" id="MF_02033"/>
    </source>
</evidence>
<evidence type="ECO:0000256" key="2">
    <source>
        <dbReference type="SAM" id="MobiDB-lite"/>
    </source>
</evidence>
<evidence type="ECO:0007829" key="3">
    <source>
        <dbReference type="PDB" id="3WQT"/>
    </source>
</evidence>
<evidence type="ECO:0007829" key="4">
    <source>
        <dbReference type="PDB" id="3WQU"/>
    </source>
</evidence>
<gene>
    <name evidence="1" type="primary">ftsA</name>
    <name type="ordered locus">SAR1161</name>
</gene>
<proteinExistence type="evidence at protein level"/>
<sequence length="468" mass="52677">MEEHYYVSIDIGSSSVKTIVGEKFHNGINVIGTGQTYTSGIKNGLIDDFDIARQAIKDTIKKASIASGVDIKEVFLKLPIIGTEVYDESNEIDFYEDTEINGSHIEKVLEGIREKNDVQETEVINVFPIRFIVDKENEVSDPKELIARHSLKVEAGVIAIQKSILINMIKCVEACGVDVLDVYSDAYNYGSILTATEKELGACVIDIGEDVTQVAFYERGELVDADSIEMAGRDITDDIAQGLNTSYETAEKVKHQYGHAFYDSASDQDIFTVEQVDSDETVQYTQKDLSDFIEARVEEIFFEVFDVLQDLGLTKVNGGFIVTGGSANLLGVKELLSDMVSEKVRIHTPSQMGIRKPEFSSAISTISSSIAFDELLDYVTINYHDNEETEEDVIDVKDKDNESKLGGFDWFKRKTNKKDTHENEVESSDEEIYQSEDNHQEHKQNHEHVQDKDKEESKFKKLMKSLFE</sequence>